<name>NDF6_BOVIN</name>
<proteinExistence type="evidence at transcript level"/>
<accession>Q08DI0</accession>
<comment type="function">
    <text evidence="1">Activates E box-dependent transcription in collaboration with TCF3/E47. May be a trans-acting factor involved in the development and maintenance of the mammalian nervous system. Transactivates the promoter of its own gene (By similarity).</text>
</comment>
<comment type="subunit">
    <text evidence="1">Efficient DNA binding requires dimerization with another bHLH protein.</text>
</comment>
<comment type="subcellular location">
    <subcellularLocation>
        <location evidence="5">Nucleus</location>
    </subcellularLocation>
</comment>
<feature type="chain" id="PRO_0000279744" description="Neurogenic differentiation factor 6">
    <location>
        <begin position="1"/>
        <end position="337"/>
    </location>
</feature>
<feature type="domain" description="bHLH" evidence="3">
    <location>
        <begin position="94"/>
        <end position="146"/>
    </location>
</feature>
<feature type="region of interest" description="Disordered" evidence="4">
    <location>
        <begin position="43"/>
        <end position="82"/>
    </location>
</feature>
<feature type="short sequence motif" description="Nuclear localization signal" evidence="2">
    <location>
        <begin position="80"/>
        <end position="86"/>
    </location>
</feature>
<feature type="compositionally biased region" description="Acidic residues" evidence="4">
    <location>
        <begin position="54"/>
        <end position="71"/>
    </location>
</feature>
<reference key="1">
    <citation type="submission" date="2006-09" db="EMBL/GenBank/DDBJ databases">
        <authorList>
            <consortium name="NIH - Mammalian Gene Collection (MGC) project"/>
        </authorList>
    </citation>
    <scope>NUCLEOTIDE SEQUENCE [LARGE SCALE MRNA]</scope>
    <source>
        <strain>Hereford</strain>
        <tissue>Hippocampus</tissue>
    </source>
</reference>
<dbReference type="EMBL" id="BC123740">
    <property type="protein sequence ID" value="AAI23741.1"/>
    <property type="molecule type" value="mRNA"/>
</dbReference>
<dbReference type="RefSeq" id="NP_001069689.1">
    <property type="nucleotide sequence ID" value="NM_001076221.1"/>
</dbReference>
<dbReference type="SMR" id="Q08DI0"/>
<dbReference type="FunCoup" id="Q08DI0">
    <property type="interactions" value="26"/>
</dbReference>
<dbReference type="STRING" id="9913.ENSBTAP00000000728"/>
<dbReference type="PaxDb" id="9913-ENSBTAP00000000728"/>
<dbReference type="Ensembl" id="ENSBTAT00000000728.3">
    <property type="protein sequence ID" value="ENSBTAP00000000728.2"/>
    <property type="gene ID" value="ENSBTAG00000000558.3"/>
</dbReference>
<dbReference type="GeneID" id="540464"/>
<dbReference type="KEGG" id="bta:540464"/>
<dbReference type="CTD" id="63974"/>
<dbReference type="VEuPathDB" id="HostDB:ENSBTAG00000000558"/>
<dbReference type="VGNC" id="VGNC:32020">
    <property type="gene designation" value="NEUROD6"/>
</dbReference>
<dbReference type="eggNOG" id="KOG3898">
    <property type="taxonomic scope" value="Eukaryota"/>
</dbReference>
<dbReference type="GeneTree" id="ENSGT00940000159827"/>
<dbReference type="HOGENOM" id="CLU_055134_1_0_1"/>
<dbReference type="InParanoid" id="Q08DI0"/>
<dbReference type="OMA" id="FPYDFHL"/>
<dbReference type="OrthoDB" id="10039134at2759"/>
<dbReference type="TreeFam" id="TF315153"/>
<dbReference type="Proteomes" id="UP000009136">
    <property type="component" value="Chromosome 4"/>
</dbReference>
<dbReference type="Bgee" id="ENSBTAG00000000558">
    <property type="expression patterns" value="Expressed in Ammon's horn and 10 other cell types or tissues"/>
</dbReference>
<dbReference type="GO" id="GO:0005634">
    <property type="term" value="C:nucleus"/>
    <property type="evidence" value="ECO:0000318"/>
    <property type="project" value="GO_Central"/>
</dbReference>
<dbReference type="GO" id="GO:0001228">
    <property type="term" value="F:DNA-binding transcription activator activity, RNA polymerase II-specific"/>
    <property type="evidence" value="ECO:0007669"/>
    <property type="project" value="Ensembl"/>
</dbReference>
<dbReference type="GO" id="GO:0000981">
    <property type="term" value="F:DNA-binding transcription factor activity, RNA polymerase II-specific"/>
    <property type="evidence" value="ECO:0000318"/>
    <property type="project" value="GO_Central"/>
</dbReference>
<dbReference type="GO" id="GO:0070888">
    <property type="term" value="F:E-box binding"/>
    <property type="evidence" value="ECO:0000318"/>
    <property type="project" value="GO_Central"/>
</dbReference>
<dbReference type="GO" id="GO:0046983">
    <property type="term" value="F:protein dimerization activity"/>
    <property type="evidence" value="ECO:0007669"/>
    <property type="project" value="InterPro"/>
</dbReference>
<dbReference type="GO" id="GO:0061564">
    <property type="term" value="P:axon development"/>
    <property type="evidence" value="ECO:0000318"/>
    <property type="project" value="GO_Central"/>
</dbReference>
<dbReference type="GO" id="GO:0021542">
    <property type="term" value="P:dentate gyrus development"/>
    <property type="evidence" value="ECO:0007669"/>
    <property type="project" value="Ensembl"/>
</dbReference>
<dbReference type="GO" id="GO:0045944">
    <property type="term" value="P:positive regulation of transcription by RNA polymerase II"/>
    <property type="evidence" value="ECO:0000318"/>
    <property type="project" value="GO_Central"/>
</dbReference>
<dbReference type="GO" id="GO:0007423">
    <property type="term" value="P:sensory organ development"/>
    <property type="evidence" value="ECO:0000318"/>
    <property type="project" value="GO_Central"/>
</dbReference>
<dbReference type="CDD" id="cd19722">
    <property type="entry name" value="bHLH_TS_NeuroD6_ATOH2"/>
    <property type="match status" value="1"/>
</dbReference>
<dbReference type="FunFam" id="4.10.280.10:FF:000006">
    <property type="entry name" value="Neurogenic differentiation factor"/>
    <property type="match status" value="1"/>
</dbReference>
<dbReference type="Gene3D" id="4.10.280.10">
    <property type="entry name" value="Helix-loop-helix DNA-binding domain"/>
    <property type="match status" value="1"/>
</dbReference>
<dbReference type="InterPro" id="IPR011598">
    <property type="entry name" value="bHLH_dom"/>
</dbReference>
<dbReference type="InterPro" id="IPR050359">
    <property type="entry name" value="bHLH_transcription_factors"/>
</dbReference>
<dbReference type="InterPro" id="IPR036638">
    <property type="entry name" value="HLH_DNA-bd_sf"/>
</dbReference>
<dbReference type="InterPro" id="IPR022575">
    <property type="entry name" value="NeuroD_DUF"/>
</dbReference>
<dbReference type="InterPro" id="IPR016637">
    <property type="entry name" value="TF_bHLH_NeuroD"/>
</dbReference>
<dbReference type="PANTHER" id="PTHR19290">
    <property type="entry name" value="BASIC HELIX-LOOP-HELIX PROTEIN NEUROGENIN-RELATED"/>
    <property type="match status" value="1"/>
</dbReference>
<dbReference type="PANTHER" id="PTHR19290:SF9">
    <property type="entry name" value="NEUROGENIC DIFFERENTIATION FACTOR 6"/>
    <property type="match status" value="1"/>
</dbReference>
<dbReference type="Pfam" id="PF00010">
    <property type="entry name" value="HLH"/>
    <property type="match status" value="1"/>
</dbReference>
<dbReference type="Pfam" id="PF12533">
    <property type="entry name" value="Neuro_bHLH"/>
    <property type="match status" value="1"/>
</dbReference>
<dbReference type="PIRSF" id="PIRSF015618">
    <property type="entry name" value="bHLH_NeuroD"/>
    <property type="match status" value="1"/>
</dbReference>
<dbReference type="SMART" id="SM00353">
    <property type="entry name" value="HLH"/>
    <property type="match status" value="1"/>
</dbReference>
<dbReference type="SUPFAM" id="SSF47459">
    <property type="entry name" value="HLH, helix-loop-helix DNA-binding domain"/>
    <property type="match status" value="1"/>
</dbReference>
<dbReference type="PROSITE" id="PS50888">
    <property type="entry name" value="BHLH"/>
    <property type="match status" value="1"/>
</dbReference>
<organism>
    <name type="scientific">Bos taurus</name>
    <name type="common">Bovine</name>
    <dbReference type="NCBI Taxonomy" id="9913"/>
    <lineage>
        <taxon>Eukaryota</taxon>
        <taxon>Metazoa</taxon>
        <taxon>Chordata</taxon>
        <taxon>Craniata</taxon>
        <taxon>Vertebrata</taxon>
        <taxon>Euteleostomi</taxon>
        <taxon>Mammalia</taxon>
        <taxon>Eutheria</taxon>
        <taxon>Laurasiatheria</taxon>
        <taxon>Artiodactyla</taxon>
        <taxon>Ruminantia</taxon>
        <taxon>Pecora</taxon>
        <taxon>Bovidae</taxon>
        <taxon>Bovinae</taxon>
        <taxon>Bos</taxon>
    </lineage>
</organism>
<sequence>MLTLPFDESVVMPESQMCRKFSRECEDQKQIKKPESFSKQIVLRGKSIKRAPGEETEKEEEEEDREEEDENGLPRRRGLRKKKTTKLRLERVKFRRQEANARERNRMHGLNDALDNLRKVVPCYSKTQKLSKIETLRLAKNYIWALSEILRIGKRPDLLTFVQNLCKGLSQPTTNLVAGCLQLNARSFLVGQGGEAAHHTRSPYSTFYPPYHSPELTTPPGHGTLDNSKSMKPYNYCSAYESFYESTSPECASPQFEGPLSPPPINYNGIFSLKQEETLDYGKNYNYGMHYCAVPPRGPLGQGAMFRLPTDSHFPYDLHLRSQSLTMQDELNAVFHN</sequence>
<keyword id="KW-0010">Activator</keyword>
<keyword id="KW-0217">Developmental protein</keyword>
<keyword id="KW-0221">Differentiation</keyword>
<keyword id="KW-0238">DNA-binding</keyword>
<keyword id="KW-0524">Neurogenesis</keyword>
<keyword id="KW-0539">Nucleus</keyword>
<keyword id="KW-1185">Reference proteome</keyword>
<keyword id="KW-0804">Transcription</keyword>
<keyword id="KW-0805">Transcription regulation</keyword>
<evidence type="ECO:0000250" key="1"/>
<evidence type="ECO:0000255" key="2"/>
<evidence type="ECO:0000255" key="3">
    <source>
        <dbReference type="PROSITE-ProRule" id="PRU00981"/>
    </source>
</evidence>
<evidence type="ECO:0000256" key="4">
    <source>
        <dbReference type="SAM" id="MobiDB-lite"/>
    </source>
</evidence>
<evidence type="ECO:0000305" key="5"/>
<protein>
    <recommendedName>
        <fullName>Neurogenic differentiation factor 6</fullName>
        <shortName>NeuroD6</shortName>
    </recommendedName>
</protein>
<gene>
    <name type="primary">NEUROD6</name>
</gene>